<keyword id="KW-0007">Acetylation</keyword>
<keyword id="KW-0025">Alternative splicing</keyword>
<keyword id="KW-0238">DNA-binding</keyword>
<keyword id="KW-0242">Dwarfism</keyword>
<keyword id="KW-0991">Intellectual disability</keyword>
<keyword id="KW-1017">Isopeptide bond</keyword>
<keyword id="KW-0479">Metal-binding</keyword>
<keyword id="KW-0539">Nucleus</keyword>
<keyword id="KW-0597">Phosphoprotein</keyword>
<keyword id="KW-1267">Proteomics identification</keyword>
<keyword id="KW-1185">Reference proteome</keyword>
<keyword id="KW-0677">Repeat</keyword>
<keyword id="KW-0678">Repressor</keyword>
<keyword id="KW-0804">Transcription</keyword>
<keyword id="KW-0805">Transcription regulation</keyword>
<keyword id="KW-0832">Ubl conjugation</keyword>
<keyword id="KW-0862">Zinc</keyword>
<keyword id="KW-0863">Zinc-finger</keyword>
<evidence type="ECO:0000250" key="1"/>
<evidence type="ECO:0000250" key="2">
    <source>
        <dbReference type="UniProtKB" id="Q61624"/>
    </source>
</evidence>
<evidence type="ECO:0000255" key="3">
    <source>
        <dbReference type="PROSITE-ProRule" id="PRU00042"/>
    </source>
</evidence>
<evidence type="ECO:0000256" key="4">
    <source>
        <dbReference type="SAM" id="MobiDB-lite"/>
    </source>
</evidence>
<evidence type="ECO:0000269" key="5">
    <source>
    </source>
</evidence>
<evidence type="ECO:0000269" key="6">
    <source>
    </source>
</evidence>
<evidence type="ECO:0000303" key="7">
    <source>
    </source>
</evidence>
<evidence type="ECO:0000305" key="8"/>
<evidence type="ECO:0007744" key="9">
    <source>
    </source>
</evidence>
<evidence type="ECO:0007744" key="10">
    <source>
    </source>
</evidence>
<evidence type="ECO:0007744" key="11">
    <source>
    </source>
</evidence>
<evidence type="ECO:0007744" key="12">
    <source>
    </source>
</evidence>
<evidence type="ECO:0007744" key="13">
    <source>
    </source>
</evidence>
<evidence type="ECO:0007744" key="14">
    <source>
    </source>
</evidence>
<evidence type="ECO:0007744" key="15">
    <source>
    </source>
</evidence>
<evidence type="ECO:0007744" key="16">
    <source>
    </source>
</evidence>
<evidence type="ECO:0007744" key="17">
    <source>
    </source>
</evidence>
<evidence type="ECO:0007744" key="18">
    <source>
    </source>
</evidence>
<evidence type="ECO:0007744" key="19">
    <source>
    </source>
</evidence>
<gene>
    <name type="primary">ZNF148</name>
    <name type="synonym">ZBP89</name>
</gene>
<dbReference type="EMBL" id="AF039019">
    <property type="protein sequence ID" value="AAC39926.1"/>
    <property type="molecule type" value="mRNA"/>
</dbReference>
<dbReference type="EMBL" id="AJ236885">
    <property type="protein sequence ID" value="CAA15422.1"/>
    <property type="molecule type" value="mRNA"/>
</dbReference>
<dbReference type="EMBL" id="AC108688">
    <property type="status" value="NOT_ANNOTATED_CDS"/>
    <property type="molecule type" value="Genomic_DNA"/>
</dbReference>
<dbReference type="EMBL" id="CH471052">
    <property type="protein sequence ID" value="EAW79394.1"/>
    <property type="molecule type" value="Genomic_DNA"/>
</dbReference>
<dbReference type="EMBL" id="CH471052">
    <property type="protein sequence ID" value="EAW79395.1"/>
    <property type="molecule type" value="Genomic_DNA"/>
</dbReference>
<dbReference type="EMBL" id="CH471052">
    <property type="protein sequence ID" value="EAW79396.1"/>
    <property type="molecule type" value="Genomic_DNA"/>
</dbReference>
<dbReference type="EMBL" id="CH471052">
    <property type="protein sequence ID" value="EAW79398.1"/>
    <property type="molecule type" value="Genomic_DNA"/>
</dbReference>
<dbReference type="EMBL" id="BC018971">
    <property type="protein sequence ID" value="AAH18971.1"/>
    <property type="molecule type" value="mRNA"/>
</dbReference>
<dbReference type="EMBL" id="BC050260">
    <property type="protein sequence ID" value="AAH50260.1"/>
    <property type="molecule type" value="mRNA"/>
</dbReference>
<dbReference type="EMBL" id="U96633">
    <property type="protein sequence ID" value="AAB57692.1"/>
    <property type="molecule type" value="Genomic_DNA"/>
</dbReference>
<dbReference type="CCDS" id="CCDS3031.1">
    <molecule id="Q9UQR1-1"/>
</dbReference>
<dbReference type="RefSeq" id="NP_001335353.1">
    <molecule id="Q9UQR1-1"/>
    <property type="nucleotide sequence ID" value="NM_001348424.1"/>
</dbReference>
<dbReference type="RefSeq" id="NP_001335354.1">
    <molecule id="Q9UQR1-1"/>
    <property type="nucleotide sequence ID" value="NM_001348425.2"/>
</dbReference>
<dbReference type="RefSeq" id="NP_001335355.1">
    <molecule id="Q9UQR1-1"/>
    <property type="nucleotide sequence ID" value="NM_001348426.2"/>
</dbReference>
<dbReference type="RefSeq" id="NP_001335356.1">
    <molecule id="Q9UQR1-1"/>
    <property type="nucleotide sequence ID" value="NM_001348427.2"/>
</dbReference>
<dbReference type="RefSeq" id="NP_001335357.1">
    <molecule id="Q9UQR1-1"/>
    <property type="nucleotide sequence ID" value="NM_001348428.2"/>
</dbReference>
<dbReference type="RefSeq" id="NP_001335358.1">
    <molecule id="Q9UQR1-1"/>
    <property type="nucleotide sequence ID" value="NM_001348429.2"/>
</dbReference>
<dbReference type="RefSeq" id="NP_001335359.1">
    <molecule id="Q9UQR1-1"/>
    <property type="nucleotide sequence ID" value="NM_001348430.2"/>
</dbReference>
<dbReference type="RefSeq" id="NP_001335360.1">
    <molecule id="Q9UQR1-1"/>
    <property type="nucleotide sequence ID" value="NM_001348431.2"/>
</dbReference>
<dbReference type="RefSeq" id="NP_001335361.1">
    <molecule id="Q9UQR1-1"/>
    <property type="nucleotide sequence ID" value="NM_001348432.2"/>
</dbReference>
<dbReference type="RefSeq" id="NP_001335362.1">
    <molecule id="Q9UQR1-1"/>
    <property type="nucleotide sequence ID" value="NM_001348433.2"/>
</dbReference>
<dbReference type="RefSeq" id="NP_068799.2">
    <molecule id="Q9UQR1-1"/>
    <property type="nucleotide sequence ID" value="NM_021964.3"/>
</dbReference>
<dbReference type="SMR" id="Q9UQR1"/>
<dbReference type="BioGRID" id="113501">
    <property type="interactions" value="138"/>
</dbReference>
<dbReference type="FunCoup" id="Q9UQR1">
    <property type="interactions" value="4030"/>
</dbReference>
<dbReference type="IntAct" id="Q9UQR1">
    <property type="interactions" value="76"/>
</dbReference>
<dbReference type="MINT" id="Q9UQR1"/>
<dbReference type="STRING" id="9606.ENSP00000353863"/>
<dbReference type="GlyCosmos" id="Q9UQR1">
    <property type="glycosylation" value="6 sites, 1 glycan"/>
</dbReference>
<dbReference type="GlyGen" id="Q9UQR1">
    <property type="glycosylation" value="9 sites, 1 O-linked glycan (8 sites)"/>
</dbReference>
<dbReference type="iPTMnet" id="Q9UQR1"/>
<dbReference type="PhosphoSitePlus" id="Q9UQR1"/>
<dbReference type="SwissPalm" id="Q9UQR1"/>
<dbReference type="BioMuta" id="ZNF148"/>
<dbReference type="DMDM" id="12643385"/>
<dbReference type="jPOST" id="Q9UQR1"/>
<dbReference type="MassIVE" id="Q9UQR1"/>
<dbReference type="PaxDb" id="9606-ENSP00000353863"/>
<dbReference type="PeptideAtlas" id="Q9UQR1"/>
<dbReference type="ProteomicsDB" id="67196"/>
<dbReference type="ProteomicsDB" id="85574">
    <molecule id="Q9UQR1-1"/>
</dbReference>
<dbReference type="Pumba" id="Q9UQR1"/>
<dbReference type="Antibodypedia" id="901">
    <property type="antibodies" value="247 antibodies from 29 providers"/>
</dbReference>
<dbReference type="DNASU" id="7707"/>
<dbReference type="Ensembl" id="ENST00000360647.9">
    <molecule id="Q9UQR1-1"/>
    <property type="protein sequence ID" value="ENSP00000353863.4"/>
    <property type="gene ID" value="ENSG00000163848.21"/>
</dbReference>
<dbReference type="Ensembl" id="ENST00000471196.2">
    <molecule id="Q9UQR1-1"/>
    <property type="protein sequence ID" value="ENSP00000420038.2"/>
    <property type="gene ID" value="ENSG00000163848.21"/>
</dbReference>
<dbReference type="Ensembl" id="ENST00000484491.5">
    <molecule id="Q9UQR1-1"/>
    <property type="protein sequence ID" value="ENSP00000420335.1"/>
    <property type="gene ID" value="ENSG00000163848.21"/>
</dbReference>
<dbReference type="Ensembl" id="ENST00000485866.5">
    <molecule id="Q9UQR1-1"/>
    <property type="protein sequence ID" value="ENSP00000420448.1"/>
    <property type="gene ID" value="ENSG00000163848.21"/>
</dbReference>
<dbReference type="Ensembl" id="ENST00000492394.5">
    <molecule id="Q9UQR1-1"/>
    <property type="protein sequence ID" value="ENSP00000419322.1"/>
    <property type="gene ID" value="ENSG00000163848.21"/>
</dbReference>
<dbReference type="Ensembl" id="ENST00000700044.1">
    <molecule id="Q9UQR1-1"/>
    <property type="protein sequence ID" value="ENSP00000514760.1"/>
    <property type="gene ID" value="ENSG00000163848.21"/>
</dbReference>
<dbReference type="GeneID" id="7707"/>
<dbReference type="KEGG" id="hsa:7707"/>
<dbReference type="MANE-Select" id="ENST00000360647.9">
    <property type="protein sequence ID" value="ENSP00000353863.4"/>
    <property type="RefSeq nucleotide sequence ID" value="NM_021964.3"/>
    <property type="RefSeq protein sequence ID" value="NP_068799.2"/>
</dbReference>
<dbReference type="UCSC" id="uc003ehx.5">
    <molecule id="Q9UQR1-1"/>
    <property type="organism name" value="human"/>
</dbReference>
<dbReference type="AGR" id="HGNC:12933"/>
<dbReference type="CTD" id="7707"/>
<dbReference type="DisGeNET" id="7707"/>
<dbReference type="GeneCards" id="ZNF148"/>
<dbReference type="HGNC" id="HGNC:12933">
    <property type="gene designation" value="ZNF148"/>
</dbReference>
<dbReference type="HPA" id="ENSG00000163848">
    <property type="expression patterns" value="Low tissue specificity"/>
</dbReference>
<dbReference type="MalaCards" id="ZNF148"/>
<dbReference type="MIM" id="601897">
    <property type="type" value="gene"/>
</dbReference>
<dbReference type="MIM" id="617260">
    <property type="type" value="phenotype"/>
</dbReference>
<dbReference type="neXtProt" id="NX_Q9UQR1"/>
<dbReference type="OpenTargets" id="ENSG00000163848"/>
<dbReference type="PharmGKB" id="PA37520"/>
<dbReference type="VEuPathDB" id="HostDB:ENSG00000163848"/>
<dbReference type="eggNOG" id="KOG1721">
    <property type="taxonomic scope" value="Eukaryota"/>
</dbReference>
<dbReference type="GeneTree" id="ENSGT00940000157406"/>
<dbReference type="HOGENOM" id="CLU_025987_1_0_1"/>
<dbReference type="InParanoid" id="Q9UQR1"/>
<dbReference type="OMA" id="QPMNTEI"/>
<dbReference type="OrthoDB" id="8117402at2759"/>
<dbReference type="PAN-GO" id="Q9UQR1">
    <property type="GO annotations" value="3 GO annotations based on evolutionary models"/>
</dbReference>
<dbReference type="PhylomeDB" id="Q9UQR1"/>
<dbReference type="TreeFam" id="TF331779"/>
<dbReference type="PathwayCommons" id="Q9UQR1"/>
<dbReference type="SignaLink" id="Q9UQR1"/>
<dbReference type="SIGNOR" id="Q9UQR1"/>
<dbReference type="BioGRID-ORCS" id="7707">
    <property type="hits" value="53 hits in 1195 CRISPR screens"/>
</dbReference>
<dbReference type="ChiTaRS" id="ZNF148">
    <property type="organism name" value="human"/>
</dbReference>
<dbReference type="GeneWiki" id="ZNF148"/>
<dbReference type="GenomeRNAi" id="7707"/>
<dbReference type="Pharos" id="Q9UQR1">
    <property type="development level" value="Tbio"/>
</dbReference>
<dbReference type="PRO" id="PR:Q9UQR1"/>
<dbReference type="Proteomes" id="UP000005640">
    <property type="component" value="Chromosome 3"/>
</dbReference>
<dbReference type="RNAct" id="Q9UQR1">
    <property type="molecule type" value="protein"/>
</dbReference>
<dbReference type="Bgee" id="ENSG00000163848">
    <property type="expression patterns" value="Expressed in caput epididymis and 215 other cell types or tissues"/>
</dbReference>
<dbReference type="ExpressionAtlas" id="Q9UQR1">
    <property type="expression patterns" value="baseline and differential"/>
</dbReference>
<dbReference type="GO" id="GO:0005794">
    <property type="term" value="C:Golgi apparatus"/>
    <property type="evidence" value="ECO:0000314"/>
    <property type="project" value="HPA"/>
</dbReference>
<dbReference type="GO" id="GO:0005654">
    <property type="term" value="C:nucleoplasm"/>
    <property type="evidence" value="ECO:0000314"/>
    <property type="project" value="HPA"/>
</dbReference>
<dbReference type="GO" id="GO:0003700">
    <property type="term" value="F:DNA-binding transcription factor activity"/>
    <property type="evidence" value="ECO:0000318"/>
    <property type="project" value="GO_Central"/>
</dbReference>
<dbReference type="GO" id="GO:0001227">
    <property type="term" value="F:DNA-binding transcription repressor activity, RNA polymerase II-specific"/>
    <property type="evidence" value="ECO:0000314"/>
    <property type="project" value="NTNU_SB"/>
</dbReference>
<dbReference type="GO" id="GO:0000978">
    <property type="term" value="F:RNA polymerase II cis-regulatory region sequence-specific DNA binding"/>
    <property type="evidence" value="ECO:0000314"/>
    <property type="project" value="NTNU_SB"/>
</dbReference>
<dbReference type="GO" id="GO:0043565">
    <property type="term" value="F:sequence-specific DNA binding"/>
    <property type="evidence" value="ECO:0000314"/>
    <property type="project" value="UniProtKB"/>
</dbReference>
<dbReference type="GO" id="GO:0008270">
    <property type="term" value="F:zinc ion binding"/>
    <property type="evidence" value="ECO:0007669"/>
    <property type="project" value="UniProtKB-KW"/>
</dbReference>
<dbReference type="GO" id="GO:0006968">
    <property type="term" value="P:cellular defense response"/>
    <property type="evidence" value="ECO:0000304"/>
    <property type="project" value="ProtInc"/>
</dbReference>
<dbReference type="GO" id="GO:0007276">
    <property type="term" value="P:gamete generation"/>
    <property type="evidence" value="ECO:0007669"/>
    <property type="project" value="Ensembl"/>
</dbReference>
<dbReference type="GO" id="GO:0045892">
    <property type="term" value="P:negative regulation of DNA-templated transcription"/>
    <property type="evidence" value="ECO:0000314"/>
    <property type="project" value="UniProtKB"/>
</dbReference>
<dbReference type="GO" id="GO:0010629">
    <property type="term" value="P:negative regulation of gene expression"/>
    <property type="evidence" value="ECO:0000314"/>
    <property type="project" value="UniProtKB"/>
</dbReference>
<dbReference type="GO" id="GO:0000122">
    <property type="term" value="P:negative regulation of transcription by RNA polymerase II"/>
    <property type="evidence" value="ECO:0000314"/>
    <property type="project" value="NTNU_SB"/>
</dbReference>
<dbReference type="GO" id="GO:0045944">
    <property type="term" value="P:positive regulation of transcription by RNA polymerase II"/>
    <property type="evidence" value="ECO:0007669"/>
    <property type="project" value="Ensembl"/>
</dbReference>
<dbReference type="GO" id="GO:0006357">
    <property type="term" value="P:regulation of transcription by RNA polymerase II"/>
    <property type="evidence" value="ECO:0000318"/>
    <property type="project" value="GO_Central"/>
</dbReference>
<dbReference type="GO" id="GO:0021762">
    <property type="term" value="P:substantia nigra development"/>
    <property type="evidence" value="ECO:0007007"/>
    <property type="project" value="UniProtKB"/>
</dbReference>
<dbReference type="FunFam" id="3.30.160.60:FF:004830">
    <property type="match status" value="1"/>
</dbReference>
<dbReference type="FunFam" id="3.30.160.60:FF:000067">
    <property type="entry name" value="Vascular endothelial zinc finger 1"/>
    <property type="match status" value="1"/>
</dbReference>
<dbReference type="FunFam" id="3.30.160.60:FF:000042">
    <property type="entry name" value="Zinc finger protein 148"/>
    <property type="match status" value="2"/>
</dbReference>
<dbReference type="Gene3D" id="3.30.160.60">
    <property type="entry name" value="Classic Zinc Finger"/>
    <property type="match status" value="4"/>
</dbReference>
<dbReference type="InterPro" id="IPR050752">
    <property type="entry name" value="C2H2-ZF_domain"/>
</dbReference>
<dbReference type="InterPro" id="IPR036236">
    <property type="entry name" value="Znf_C2H2_sf"/>
</dbReference>
<dbReference type="InterPro" id="IPR013087">
    <property type="entry name" value="Znf_C2H2_type"/>
</dbReference>
<dbReference type="PANTHER" id="PTHR24384:SF189">
    <property type="entry name" value="C2H2-TYPE DOMAIN-CONTAINING PROTEIN-RELATED"/>
    <property type="match status" value="1"/>
</dbReference>
<dbReference type="PANTHER" id="PTHR24384">
    <property type="entry name" value="FINGER PUTATIVE TRANSCRIPTION FACTOR FAMILY-RELATED"/>
    <property type="match status" value="1"/>
</dbReference>
<dbReference type="Pfam" id="PF00096">
    <property type="entry name" value="zf-C2H2"/>
    <property type="match status" value="3"/>
</dbReference>
<dbReference type="SMART" id="SM00355">
    <property type="entry name" value="ZnF_C2H2"/>
    <property type="match status" value="4"/>
</dbReference>
<dbReference type="SUPFAM" id="SSF57667">
    <property type="entry name" value="beta-beta-alpha zinc fingers"/>
    <property type="match status" value="2"/>
</dbReference>
<dbReference type="PROSITE" id="PS00028">
    <property type="entry name" value="ZINC_FINGER_C2H2_1"/>
    <property type="match status" value="4"/>
</dbReference>
<dbReference type="PROSITE" id="PS50157">
    <property type="entry name" value="ZINC_FINGER_C2H2_2"/>
    <property type="match status" value="4"/>
</dbReference>
<proteinExistence type="evidence at protein level"/>
<name>ZN148_HUMAN</name>
<comment type="function">
    <text>Involved in transcriptional regulation. Represses the transcription of a number of genes including gastrin, stromelysin and enolase. Binds to the G-rich box in the enhancer region of these genes.</text>
</comment>
<comment type="subunit">
    <text evidence="2 5">Interacts with HNRNPDL (PubMed:15190078). Interacts with the 5FMC complex; the interaction requires association with CHTOP. Interacts with CAVIN1 (By similarity).</text>
</comment>
<comment type="interaction">
    <interactant intactId="EBI-2688184">
        <id>Q9UQR1</id>
    </interactant>
    <interactant intactId="EBI-739624">
        <id>Q8NHQ1</id>
        <label>CEP70</label>
    </interactant>
    <organismsDiffer>false</organismsDiffer>
    <experiments>3</experiments>
</comment>
<comment type="interaction">
    <interactant intactId="EBI-2688184">
        <id>Q9UQR1</id>
    </interactant>
    <interactant intactId="EBI-748597">
        <id>Q05D60</id>
        <label>DEUP1</label>
    </interactant>
    <organismsDiffer>false</organismsDiffer>
    <experiments>3</experiments>
</comment>
<comment type="interaction">
    <interactant intactId="EBI-2688184">
        <id>Q9UQR1</id>
    </interactant>
    <interactant intactId="EBI-10220102">
        <id>B7ZLH0</id>
        <label>FAM22F</label>
    </interactant>
    <organismsDiffer>false</organismsDiffer>
    <experiments>3</experiments>
</comment>
<comment type="interaction">
    <interactant intactId="EBI-2688184">
        <id>Q9UQR1</id>
    </interactant>
    <interactant intactId="EBI-374781">
        <id>O76003</id>
        <label>GLRX3</label>
    </interactant>
    <organismsDiffer>false</organismsDiffer>
    <experiments>3</experiments>
</comment>
<comment type="interaction">
    <interactant intactId="EBI-2688184">
        <id>Q9UQR1</id>
    </interactant>
    <interactant intactId="EBI-739467">
        <id>Q9H8Y8</id>
        <label>GORASP2</label>
    </interactant>
    <organismsDiffer>false</organismsDiffer>
    <experiments>3</experiments>
</comment>
<comment type="interaction">
    <interactant intactId="EBI-2688184">
        <id>Q9UQR1</id>
    </interactant>
    <interactant intactId="EBI-948001">
        <id>Q15323</id>
        <label>KRT31</label>
    </interactant>
    <organismsDiffer>false</organismsDiffer>
    <experiments>3</experiments>
</comment>
<comment type="interaction">
    <interactant intactId="EBI-2688184">
        <id>Q9UQR1</id>
    </interactant>
    <interactant intactId="EBI-747107">
        <id>Q8IUQ4</id>
        <label>SIAH1</label>
    </interactant>
    <organismsDiffer>false</organismsDiffer>
    <experiments>3</experiments>
</comment>
<comment type="interaction">
    <interactant intactId="EBI-2688184">
        <id>Q9UQR1</id>
    </interactant>
    <interactant intactId="EBI-6427325">
        <id>Q9UDY6</id>
        <label>TRIM10</label>
    </interactant>
    <organismsDiffer>false</organismsDiffer>
    <experiments>3</experiments>
</comment>
<comment type="interaction">
    <interactant intactId="EBI-11742222">
        <id>Q9UQR1-2</id>
    </interactant>
    <interactant intactId="EBI-11522539">
        <id>Q96MT8-3</id>
        <label>CEP63</label>
    </interactant>
    <organismsDiffer>false</organismsDiffer>
    <experiments>3</experiments>
</comment>
<comment type="interaction">
    <interactant intactId="EBI-11742222">
        <id>Q9UQR1-2</id>
    </interactant>
    <interactant intactId="EBI-10220102">
        <id>B7ZLH0</id>
        <label>FAM22F</label>
    </interactant>
    <organismsDiffer>false</organismsDiffer>
    <experiments>3</experiments>
</comment>
<comment type="interaction">
    <interactant intactId="EBI-11742222">
        <id>Q9UQR1-2</id>
    </interactant>
    <interactant intactId="EBI-739467">
        <id>Q9H8Y8</id>
        <label>GORASP2</label>
    </interactant>
    <organismsDiffer>false</organismsDiffer>
    <experiments>5</experiments>
</comment>
<comment type="interaction">
    <interactant intactId="EBI-11742222">
        <id>Q9UQR1-2</id>
    </interactant>
    <interactant intactId="EBI-12120084">
        <id>Q6IE81-3</id>
        <label>JADE1</label>
    </interactant>
    <organismsDiffer>false</organismsDiffer>
    <experiments>3</experiments>
</comment>
<comment type="interaction">
    <interactant intactId="EBI-11742222">
        <id>Q9UQR1-2</id>
    </interactant>
    <interactant intactId="EBI-1047093">
        <id>O76011</id>
        <label>KRT34</label>
    </interactant>
    <organismsDiffer>false</organismsDiffer>
    <experiments>3</experiments>
</comment>
<comment type="interaction">
    <interactant intactId="EBI-11742222">
        <id>Q9UQR1-2</id>
    </interactant>
    <interactant intactId="EBI-739832">
        <id>Q8TBB1</id>
        <label>LNX1</label>
    </interactant>
    <organismsDiffer>false</organismsDiffer>
    <experiments>3</experiments>
</comment>
<comment type="interaction">
    <interactant intactId="EBI-11742222">
        <id>Q9UQR1-2</id>
    </interactant>
    <interactant intactId="EBI-357275">
        <id>Q99471</id>
        <label>PFDN5</label>
    </interactant>
    <organismsDiffer>false</organismsDiffer>
    <experiments>3</experiments>
</comment>
<comment type="interaction">
    <interactant intactId="EBI-11742222">
        <id>Q9UQR1-2</id>
    </interactant>
    <interactant intactId="EBI-949255">
        <id>Q58EX7</id>
        <label>PLEKHG4</label>
    </interactant>
    <organismsDiffer>false</organismsDiffer>
    <experiments>3</experiments>
</comment>
<comment type="interaction">
    <interactant intactId="EBI-11742222">
        <id>Q9UQR1-2</id>
    </interactant>
    <interactant intactId="EBI-302345">
        <id>Q8ND90</id>
        <label>PNMA1</label>
    </interactant>
    <organismsDiffer>false</organismsDiffer>
    <experiments>3</experiments>
</comment>
<comment type="interaction">
    <interactant intactId="EBI-11742222">
        <id>Q9UQR1-2</id>
    </interactant>
    <interactant intactId="EBI-12029004">
        <id>P78424</id>
        <label>POU6F2</label>
    </interactant>
    <organismsDiffer>false</organismsDiffer>
    <experiments>3</experiments>
</comment>
<comment type="interaction">
    <interactant intactId="EBI-11742222">
        <id>Q9UQR1-2</id>
    </interactant>
    <interactant intactId="EBI-11975223">
        <id>Q70EL1-9</id>
        <label>USP54</label>
    </interactant>
    <organismsDiffer>false</organismsDiffer>
    <experiments>3</experiments>
</comment>
<comment type="interaction">
    <interactant intactId="EBI-11742222">
        <id>Q9UQR1-2</id>
    </interactant>
    <interactant intactId="EBI-12030590">
        <id>Q9H0C1</id>
        <label>ZMYND12</label>
    </interactant>
    <organismsDiffer>false</organismsDiffer>
    <experiments>3</experiments>
</comment>
<comment type="subcellular location">
    <subcellularLocation>
        <location>Nucleus</location>
    </subcellularLocation>
</comment>
<comment type="alternative products">
    <event type="alternative splicing"/>
    <isoform>
        <id>Q9UQR1-1</id>
        <name>1</name>
        <sequence type="displayed"/>
    </isoform>
    <isoform>
        <id>Q9UQR1-2</id>
        <name>2</name>
        <sequence type="described" ref="VSP_055938 VSP_055939"/>
    </isoform>
</comment>
<comment type="PTM">
    <text evidence="1">Sumoylated with SUMO2. Desumoylated by SENP3, resulting in the stimulation of transcription of its target genes (By similarity).</text>
</comment>
<comment type="disease" evidence="6">
    <disease id="DI-04903">
        <name>Global developmental delay, absent or hypoplastic corpus callosum, and dysmorphic facies</name>
        <acronym>GDACCF</acronym>
        <description>An autosomal dominant syndrome characterized by underdevelopment of the corpus callosum, mild to moderate developmental delay and intellectual disability, variable microcephaly or mild macrocephaly, short stature, feeding problems, facial dysmorphisms, and cardiac and renal malformations.</description>
        <dbReference type="MIM" id="617260"/>
    </disease>
    <text>The disease is caused by variants affecting the gene represented in this entry.</text>
</comment>
<comment type="similarity">
    <text evidence="8">Belongs to the krueppel C2H2-type zinc-finger protein family.</text>
</comment>
<protein>
    <recommendedName>
        <fullName>Zinc finger protein 148</fullName>
    </recommendedName>
    <alternativeName>
        <fullName>Transcription factor ZBP-89</fullName>
    </alternativeName>
    <alternativeName>
        <fullName>Zinc finger DNA-binding protein 89</fullName>
    </alternativeName>
</protein>
<accession>Q9UQR1</accession>
<accession>D3DN27</accession>
<accession>O00389</accession>
<accession>O43591</accession>
<accession>Q58EY5</accession>
<accession>Q6PJ98</accession>
<reference key="1">
    <citation type="journal article" date="1998" name="Mamm. Genome">
        <title>The human ZBP-89 homolog, located at chromosome 3q21, represses gastrin gene expression.</title>
        <authorList>
            <person name="Law D.J."/>
            <person name="Tarle S.A."/>
            <person name="Merchant J.L."/>
        </authorList>
    </citation>
    <scope>NUCLEOTIDE SEQUENCE [MRNA] (ISOFORM 1)</scope>
</reference>
<reference key="2">
    <citation type="journal article" date="1999" name="FEBS Lett.">
        <title>Human stromelysin gene promoter activity is modulated by transcription factor ZBP-89.</title>
        <authorList>
            <person name="Ye S."/>
            <person name="Whatling C."/>
            <person name="Watkins H."/>
            <person name="Henney A."/>
        </authorList>
    </citation>
    <scope>NUCLEOTIDE SEQUENCE [MRNA] (ISOFORM 1)</scope>
</reference>
<reference key="3">
    <citation type="journal article" date="2006" name="Nature">
        <title>The DNA sequence, annotation and analysis of human chromosome 3.</title>
        <authorList>
            <person name="Muzny D.M."/>
            <person name="Scherer S.E."/>
            <person name="Kaul R."/>
            <person name="Wang J."/>
            <person name="Yu J."/>
            <person name="Sudbrak R."/>
            <person name="Buhay C.J."/>
            <person name="Chen R."/>
            <person name="Cree A."/>
            <person name="Ding Y."/>
            <person name="Dugan-Rocha S."/>
            <person name="Gill R."/>
            <person name="Gunaratne P."/>
            <person name="Harris R.A."/>
            <person name="Hawes A.C."/>
            <person name="Hernandez J."/>
            <person name="Hodgson A.V."/>
            <person name="Hume J."/>
            <person name="Jackson A."/>
            <person name="Khan Z.M."/>
            <person name="Kovar-Smith C."/>
            <person name="Lewis L.R."/>
            <person name="Lozado R.J."/>
            <person name="Metzker M.L."/>
            <person name="Milosavljevic A."/>
            <person name="Miner G.R."/>
            <person name="Morgan M.B."/>
            <person name="Nazareth L.V."/>
            <person name="Scott G."/>
            <person name="Sodergren E."/>
            <person name="Song X.-Z."/>
            <person name="Steffen D."/>
            <person name="Wei S."/>
            <person name="Wheeler D.A."/>
            <person name="Wright M.W."/>
            <person name="Worley K.C."/>
            <person name="Yuan Y."/>
            <person name="Zhang Z."/>
            <person name="Adams C.Q."/>
            <person name="Ansari-Lari M.A."/>
            <person name="Ayele M."/>
            <person name="Brown M.J."/>
            <person name="Chen G."/>
            <person name="Chen Z."/>
            <person name="Clendenning J."/>
            <person name="Clerc-Blankenburg K.P."/>
            <person name="Chen R."/>
            <person name="Chen Z."/>
            <person name="Davis C."/>
            <person name="Delgado O."/>
            <person name="Dinh H.H."/>
            <person name="Dong W."/>
            <person name="Draper H."/>
            <person name="Ernst S."/>
            <person name="Fu G."/>
            <person name="Gonzalez-Garay M.L."/>
            <person name="Garcia D.K."/>
            <person name="Gillett W."/>
            <person name="Gu J."/>
            <person name="Hao B."/>
            <person name="Haugen E."/>
            <person name="Havlak P."/>
            <person name="He X."/>
            <person name="Hennig S."/>
            <person name="Hu S."/>
            <person name="Huang W."/>
            <person name="Jackson L.R."/>
            <person name="Jacob L.S."/>
            <person name="Kelly S.H."/>
            <person name="Kube M."/>
            <person name="Levy R."/>
            <person name="Li Z."/>
            <person name="Liu B."/>
            <person name="Liu J."/>
            <person name="Liu W."/>
            <person name="Lu J."/>
            <person name="Maheshwari M."/>
            <person name="Nguyen B.-V."/>
            <person name="Okwuonu G.O."/>
            <person name="Palmeiri A."/>
            <person name="Pasternak S."/>
            <person name="Perez L.M."/>
            <person name="Phelps K.A."/>
            <person name="Plopper F.J."/>
            <person name="Qiang B."/>
            <person name="Raymond C."/>
            <person name="Rodriguez R."/>
            <person name="Saenphimmachak C."/>
            <person name="Santibanez J."/>
            <person name="Shen H."/>
            <person name="Shen Y."/>
            <person name="Subramanian S."/>
            <person name="Tabor P.E."/>
            <person name="Verduzco D."/>
            <person name="Waldron L."/>
            <person name="Wang J."/>
            <person name="Wang J."/>
            <person name="Wang Q."/>
            <person name="Williams G.A."/>
            <person name="Wong G.K.-S."/>
            <person name="Yao Z."/>
            <person name="Zhang J."/>
            <person name="Zhang X."/>
            <person name="Zhao G."/>
            <person name="Zhou J."/>
            <person name="Zhou Y."/>
            <person name="Nelson D."/>
            <person name="Lehrach H."/>
            <person name="Reinhardt R."/>
            <person name="Naylor S.L."/>
            <person name="Yang H."/>
            <person name="Olson M."/>
            <person name="Weinstock G."/>
            <person name="Gibbs R.A."/>
        </authorList>
    </citation>
    <scope>NUCLEOTIDE SEQUENCE [LARGE SCALE GENOMIC DNA]</scope>
</reference>
<reference key="4">
    <citation type="submission" date="2005-09" db="EMBL/GenBank/DDBJ databases">
        <authorList>
            <person name="Mural R.J."/>
            <person name="Istrail S."/>
            <person name="Sutton G.G."/>
            <person name="Florea L."/>
            <person name="Halpern A.L."/>
            <person name="Mobarry C.M."/>
            <person name="Lippert R."/>
            <person name="Walenz B."/>
            <person name="Shatkay H."/>
            <person name="Dew I."/>
            <person name="Miller J.R."/>
            <person name="Flanigan M.J."/>
            <person name="Edwards N.J."/>
            <person name="Bolanos R."/>
            <person name="Fasulo D."/>
            <person name="Halldorsson B.V."/>
            <person name="Hannenhalli S."/>
            <person name="Turner R."/>
            <person name="Yooseph S."/>
            <person name="Lu F."/>
            <person name="Nusskern D.R."/>
            <person name="Shue B.C."/>
            <person name="Zheng X.H."/>
            <person name="Zhong F."/>
            <person name="Delcher A.L."/>
            <person name="Huson D.H."/>
            <person name="Kravitz S.A."/>
            <person name="Mouchard L."/>
            <person name="Reinert K."/>
            <person name="Remington K.A."/>
            <person name="Clark A.G."/>
            <person name="Waterman M.S."/>
            <person name="Eichler E.E."/>
            <person name="Adams M.D."/>
            <person name="Hunkapiller M.W."/>
            <person name="Myers E.W."/>
            <person name="Venter J.C."/>
        </authorList>
    </citation>
    <scope>NUCLEOTIDE SEQUENCE [LARGE SCALE GENOMIC DNA]</scope>
</reference>
<reference key="5">
    <citation type="journal article" date="2004" name="Genome Res.">
        <title>The status, quality, and expansion of the NIH full-length cDNA project: the Mammalian Gene Collection (MGC).</title>
        <authorList>
            <consortium name="The MGC Project Team"/>
        </authorList>
    </citation>
    <scope>NUCLEOTIDE SEQUENCE [LARGE SCALE MRNA] (ISOFORMS 1 AND 2)</scope>
    <source>
        <tissue>B-cell</tissue>
        <tissue>Kidney</tissue>
    </source>
</reference>
<reference key="6">
    <citation type="submission" date="1997-04" db="EMBL/GenBank/DDBJ databases">
        <title>The growth-regulating transcription factor ZBP-89 is located at human chromosome 3q21 and mouse chromosome 8B1.</title>
        <authorList>
            <person name="Law D.J."/>
            <person name="Chen X.N."/>
            <person name="Korenberg J.R."/>
            <person name="Mortensen E.R."/>
            <person name="Merchant J.L."/>
        </authorList>
    </citation>
    <scope>NUCLEOTIDE SEQUENCE [GENOMIC DNA] OF 262-665</scope>
</reference>
<reference key="7">
    <citation type="journal article" date="2004" name="J. Biol. Chem.">
        <title>Regulation of murine cytochrome c oxidase Vb gene expression during myogenesis: YY-1 and heterogeneous nuclear ribonucleoprotein D-like protein (JKTBP1) reciprocally regulate transcription activity by physical interaction with the BERF-1/ZBP-89 factor.</title>
        <authorList>
            <person name="Boopathi E."/>
            <person name="Lenka N."/>
            <person name="Prabu S.K."/>
            <person name="Fang J.-K."/>
            <person name="Wilkinson F."/>
            <person name="Atchison M."/>
            <person name="Giallongo A."/>
            <person name="Avadhani N.G."/>
        </authorList>
    </citation>
    <scope>INTERACTION WITH HNRNPDL</scope>
</reference>
<reference key="8">
    <citation type="journal article" date="2006" name="Nat. Biotechnol.">
        <title>A probability-based approach for high-throughput protein phosphorylation analysis and site localization.</title>
        <authorList>
            <person name="Beausoleil S.A."/>
            <person name="Villen J."/>
            <person name="Gerber S.A."/>
            <person name="Rush J."/>
            <person name="Gygi S.P."/>
        </authorList>
    </citation>
    <scope>PHOSPHORYLATION [LARGE SCALE ANALYSIS] AT SER-306</scope>
    <scope>IDENTIFICATION BY MASS SPECTROMETRY [LARGE SCALE ANALYSIS]</scope>
    <source>
        <tissue>Cervix carcinoma</tissue>
    </source>
</reference>
<reference key="9">
    <citation type="journal article" date="2008" name="Proc. Natl. Acad. Sci. U.S.A.">
        <title>A quantitative atlas of mitotic phosphorylation.</title>
        <authorList>
            <person name="Dephoure N."/>
            <person name="Zhou C."/>
            <person name="Villen J."/>
            <person name="Beausoleil S.A."/>
            <person name="Bakalarski C.E."/>
            <person name="Elledge S.J."/>
            <person name="Gygi S.P."/>
        </authorList>
    </citation>
    <scope>PHOSPHORYLATION [LARGE SCALE ANALYSIS] AT THR-194; SER-250; SER-306; SER-412 AND SER-784</scope>
    <scope>IDENTIFICATION BY MASS SPECTROMETRY [LARGE SCALE ANALYSIS]</scope>
    <source>
        <tissue>Cervix carcinoma</tissue>
    </source>
</reference>
<reference key="10">
    <citation type="journal article" date="2009" name="Anal. Chem.">
        <title>Lys-N and trypsin cover complementary parts of the phosphoproteome in a refined SCX-based approach.</title>
        <authorList>
            <person name="Gauci S."/>
            <person name="Helbig A.O."/>
            <person name="Slijper M."/>
            <person name="Krijgsveld J."/>
            <person name="Heck A.J."/>
            <person name="Mohammed S."/>
        </authorList>
    </citation>
    <scope>IDENTIFICATION BY MASS SPECTROMETRY [LARGE SCALE ANALYSIS]</scope>
</reference>
<reference key="11">
    <citation type="journal article" date="2009" name="Sci. Signal.">
        <title>Quantitative phosphoproteomic analysis of T cell receptor signaling reveals system-wide modulation of protein-protein interactions.</title>
        <authorList>
            <person name="Mayya V."/>
            <person name="Lundgren D.H."/>
            <person name="Hwang S.-I."/>
            <person name="Rezaul K."/>
            <person name="Wu L."/>
            <person name="Eng J.K."/>
            <person name="Rodionov V."/>
            <person name="Han D.K."/>
        </authorList>
    </citation>
    <scope>PHOSPHORYLATION [LARGE SCALE ANALYSIS] AT SER-306 AND SER-784</scope>
    <scope>IDENTIFICATION BY MASS SPECTROMETRY [LARGE SCALE ANALYSIS]</scope>
    <source>
        <tissue>Leukemic T-cell</tissue>
    </source>
</reference>
<reference key="12">
    <citation type="journal article" date="2009" name="Science">
        <title>Lysine acetylation targets protein complexes and co-regulates major cellular functions.</title>
        <authorList>
            <person name="Choudhary C."/>
            <person name="Kumar C."/>
            <person name="Gnad F."/>
            <person name="Nielsen M.L."/>
            <person name="Rehman M."/>
            <person name="Walther T.C."/>
            <person name="Olsen J.V."/>
            <person name="Mann M."/>
        </authorList>
    </citation>
    <scope>ACETYLATION [LARGE SCALE ANALYSIS] AT LYS-607</scope>
    <scope>IDENTIFICATION BY MASS SPECTROMETRY [LARGE SCALE ANALYSIS]</scope>
</reference>
<reference key="13">
    <citation type="journal article" date="2010" name="Sci. Signal.">
        <title>Quantitative phosphoproteomics reveals widespread full phosphorylation site occupancy during mitosis.</title>
        <authorList>
            <person name="Olsen J.V."/>
            <person name="Vermeulen M."/>
            <person name="Santamaria A."/>
            <person name="Kumar C."/>
            <person name="Miller M.L."/>
            <person name="Jensen L.J."/>
            <person name="Gnad F."/>
            <person name="Cox J."/>
            <person name="Jensen T.S."/>
            <person name="Nigg E.A."/>
            <person name="Brunak S."/>
            <person name="Mann M."/>
        </authorList>
    </citation>
    <scope>PHOSPHORYLATION [LARGE SCALE ANALYSIS] AT SER-306; SER-665 AND SER-784</scope>
    <scope>IDENTIFICATION BY MASS SPECTROMETRY [LARGE SCALE ANALYSIS]</scope>
    <source>
        <tissue>Cervix carcinoma</tissue>
    </source>
</reference>
<reference key="14">
    <citation type="journal article" date="2011" name="Sci. Signal.">
        <title>System-wide temporal characterization of the proteome and phosphoproteome of human embryonic stem cell differentiation.</title>
        <authorList>
            <person name="Rigbolt K.T."/>
            <person name="Prokhorova T.A."/>
            <person name="Akimov V."/>
            <person name="Henningsen J."/>
            <person name="Johansen P.T."/>
            <person name="Kratchmarova I."/>
            <person name="Kassem M."/>
            <person name="Mann M."/>
            <person name="Olsen J.V."/>
            <person name="Blagoev B."/>
        </authorList>
    </citation>
    <scope>IDENTIFICATION BY MASS SPECTROMETRY [LARGE SCALE ANALYSIS]</scope>
</reference>
<reference key="15">
    <citation type="journal article" date="2013" name="J. Proteome Res.">
        <title>Toward a comprehensive characterization of a human cancer cell phosphoproteome.</title>
        <authorList>
            <person name="Zhou H."/>
            <person name="Di Palma S."/>
            <person name="Preisinger C."/>
            <person name="Peng M."/>
            <person name="Polat A.N."/>
            <person name="Heck A.J."/>
            <person name="Mohammed S."/>
        </authorList>
    </citation>
    <scope>PHOSPHORYLATION [LARGE SCALE ANALYSIS] AT SER-306; SER-412 AND SER-665</scope>
    <scope>IDENTIFICATION BY MASS SPECTROMETRY [LARGE SCALE ANALYSIS]</scope>
    <source>
        <tissue>Cervix carcinoma</tissue>
        <tissue>Erythroleukemia</tissue>
    </source>
</reference>
<reference key="16">
    <citation type="journal article" date="2014" name="J. Proteomics">
        <title>An enzyme assisted RP-RPLC approach for in-depth analysis of human liver phosphoproteome.</title>
        <authorList>
            <person name="Bian Y."/>
            <person name="Song C."/>
            <person name="Cheng K."/>
            <person name="Dong M."/>
            <person name="Wang F."/>
            <person name="Huang J."/>
            <person name="Sun D."/>
            <person name="Wang L."/>
            <person name="Ye M."/>
            <person name="Zou H."/>
        </authorList>
    </citation>
    <scope>PHOSPHORYLATION [LARGE SCALE ANALYSIS] AT SER-306 AND SER-412</scope>
    <scope>IDENTIFICATION BY MASS SPECTROMETRY [LARGE SCALE ANALYSIS]</scope>
    <source>
        <tissue>Liver</tissue>
    </source>
</reference>
<reference key="17">
    <citation type="journal article" date="2014" name="Nat. Struct. Mol. Biol.">
        <title>Uncovering global SUMOylation signaling networks in a site-specific manner.</title>
        <authorList>
            <person name="Hendriks I.A."/>
            <person name="D'Souza R.C."/>
            <person name="Yang B."/>
            <person name="Verlaan-de Vries M."/>
            <person name="Mann M."/>
            <person name="Vertegaal A.C."/>
        </authorList>
    </citation>
    <scope>SUMOYLATION [LARGE SCALE ANALYSIS] AT LYS-356</scope>
    <scope>IDENTIFICATION BY MASS SPECTROMETRY [LARGE SCALE ANALYSIS]</scope>
</reference>
<reference key="18">
    <citation type="journal article" date="2014" name="Proc. Natl. Acad. Sci. U.S.A.">
        <title>Mapping of SUMO sites and analysis of SUMOylation changes induced by external stimuli.</title>
        <authorList>
            <person name="Impens F."/>
            <person name="Radoshevich L."/>
            <person name="Cossart P."/>
            <person name="Ribet D."/>
        </authorList>
    </citation>
    <scope>SUMOYLATION [LARGE SCALE ANALYSIS] AT LYS-356</scope>
    <scope>IDENTIFICATION BY MASS SPECTROMETRY [LARGE SCALE ANALYSIS]</scope>
</reference>
<reference key="19">
    <citation type="journal article" date="2015" name="Mol. Cell. Proteomics">
        <title>System-wide analysis of SUMOylation dynamics in response to replication stress reveals novel small ubiquitin-like modified target proteins and acceptor lysines relevant for genome stability.</title>
        <authorList>
            <person name="Xiao Z."/>
            <person name="Chang J.G."/>
            <person name="Hendriks I.A."/>
            <person name="Sigurdsson J.O."/>
            <person name="Olsen J.V."/>
            <person name="Vertegaal A.C."/>
        </authorList>
    </citation>
    <scope>SUMOYLATION [LARGE SCALE ANALYSIS] AT LYS-356</scope>
    <scope>IDENTIFICATION BY MASS SPECTROMETRY [LARGE SCALE ANALYSIS]</scope>
</reference>
<reference key="20">
    <citation type="journal article" date="2016" name="Genome Med.">
        <title>Truncating de novo mutations in the Krueppel-type zinc-finger gene ZNF148 in patients with corpus callosum defects, developmental delay, short stature, and dysmorphisms.</title>
        <authorList>
            <person name="Stevens S.J."/>
            <person name="van Essen A.J."/>
            <person name="van Ravenswaaij C.M."/>
            <person name="Elias A.F."/>
            <person name="Haven J.A."/>
            <person name="Lelieveld S.H."/>
            <person name="Pfundt R."/>
            <person name="Nillesen W.M."/>
            <person name="Yntema H.G."/>
            <person name="van Roozendaal K."/>
            <person name="Stegmann A.P."/>
            <person name="Gilissen C."/>
            <person name="Brunner H.G."/>
        </authorList>
    </citation>
    <scope>INVOLVEMENT IN GDACCF</scope>
</reference>
<reference key="21">
    <citation type="journal article" date="2017" name="Nat. Struct. Mol. Biol.">
        <title>Site-specific mapping of the human SUMO proteome reveals co-modification with phosphorylation.</title>
        <authorList>
            <person name="Hendriks I.A."/>
            <person name="Lyon D."/>
            <person name="Young C."/>
            <person name="Jensen L.J."/>
            <person name="Vertegaal A.C."/>
            <person name="Nielsen M.L."/>
        </authorList>
    </citation>
    <scope>SUMOYLATION [LARGE SCALE ANALYSIS] AT LYS-6; LYS-88; LYS-115; LYS-132; LYS-291; LYS-308; LYS-356; LYS-402; LYS-421 AND LYS-424</scope>
    <scope>IDENTIFICATION BY MASS SPECTROMETRY [LARGE SCALE ANALYSIS]</scope>
</reference>
<feature type="chain" id="PRO_0000047427" description="Zinc finger protein 148">
    <location>
        <begin position="1"/>
        <end position="794"/>
    </location>
</feature>
<feature type="zinc finger region" description="C2H2-type 1" evidence="3">
    <location>
        <begin position="171"/>
        <end position="193"/>
    </location>
</feature>
<feature type="zinc finger region" description="C2H2-type 2" evidence="3">
    <location>
        <begin position="199"/>
        <end position="221"/>
    </location>
</feature>
<feature type="zinc finger region" description="C2H2-type 3" evidence="3">
    <location>
        <begin position="227"/>
        <end position="249"/>
    </location>
</feature>
<feature type="zinc finger region" description="C2H2-type 4" evidence="3">
    <location>
        <begin position="255"/>
        <end position="278"/>
    </location>
</feature>
<feature type="region of interest" description="Disordered" evidence="4">
    <location>
        <begin position="298"/>
        <end position="336"/>
    </location>
</feature>
<feature type="region of interest" description="Disordered" evidence="4">
    <location>
        <begin position="574"/>
        <end position="596"/>
    </location>
</feature>
<feature type="compositionally biased region" description="Basic and acidic residues" evidence="4">
    <location>
        <begin position="321"/>
        <end position="336"/>
    </location>
</feature>
<feature type="compositionally biased region" description="Polar residues" evidence="4">
    <location>
        <begin position="574"/>
        <end position="588"/>
    </location>
</feature>
<feature type="modified residue" description="Phosphoserine" evidence="2">
    <location>
        <position position="51"/>
    </location>
</feature>
<feature type="modified residue" description="Phosphothreonine" evidence="10">
    <location>
        <position position="194"/>
    </location>
</feature>
<feature type="modified residue" description="Phosphoserine" evidence="10">
    <location>
        <position position="250"/>
    </location>
</feature>
<feature type="modified residue" description="Phosphoserine" evidence="2">
    <location>
        <position position="301"/>
    </location>
</feature>
<feature type="modified residue" description="Phosphoserine" evidence="9 10 12 13 14 15">
    <location>
        <position position="306"/>
    </location>
</feature>
<feature type="modified residue" description="Phosphoserine" evidence="10 14 15">
    <location>
        <position position="412"/>
    </location>
</feature>
<feature type="modified residue" description="N6-acetyllysine" evidence="11">
    <location>
        <position position="607"/>
    </location>
</feature>
<feature type="modified residue" description="Phosphoserine" evidence="13 14">
    <location>
        <position position="665"/>
    </location>
</feature>
<feature type="modified residue" description="Phosphoserine" evidence="10 12 13">
    <location>
        <position position="784"/>
    </location>
</feature>
<feature type="cross-link" description="Glycyl lysine isopeptide (Lys-Gly) (interchain with G-Cter in SUMO2)" evidence="19">
    <location>
        <position position="6"/>
    </location>
</feature>
<feature type="cross-link" description="Glycyl lysine isopeptide (Lys-Gly) (interchain with G-Cter in SUMO2)" evidence="19">
    <location>
        <position position="88"/>
    </location>
</feature>
<feature type="cross-link" description="Glycyl lysine isopeptide (Lys-Gly) (interchain with G-Cter in SUMO2)" evidence="19">
    <location>
        <position position="115"/>
    </location>
</feature>
<feature type="cross-link" description="Glycyl lysine isopeptide (Lys-Gly) (interchain with G-Cter in SUMO2)" evidence="19">
    <location>
        <position position="132"/>
    </location>
</feature>
<feature type="cross-link" description="Glycyl lysine isopeptide (Lys-Gly) (interchain with G-Cter in SUMO2)" evidence="19">
    <location>
        <position position="291"/>
    </location>
</feature>
<feature type="cross-link" description="Glycyl lysine isopeptide (Lys-Gly) (interchain with G-Cter in SUMO2)" evidence="19">
    <location>
        <position position="308"/>
    </location>
</feature>
<feature type="cross-link" description="Glycyl lysine isopeptide (Lys-Gly) (interchain with G-Cter in SUMO1); alternate" evidence="16">
    <location>
        <position position="356"/>
    </location>
</feature>
<feature type="cross-link" description="Glycyl lysine isopeptide (Lys-Gly) (interchain with G-Cter in SUMO2); alternate" evidence="16 17 18 19">
    <location>
        <position position="356"/>
    </location>
</feature>
<feature type="cross-link" description="Glycyl lysine isopeptide (Lys-Gly) (interchain with G-Cter in SUMO2)" evidence="19">
    <location>
        <position position="402"/>
    </location>
</feature>
<feature type="cross-link" description="Glycyl lysine isopeptide (Lys-Gly) (interchain with G-Cter in SUMO2)" evidence="19">
    <location>
        <position position="421"/>
    </location>
</feature>
<feature type="cross-link" description="Glycyl lysine isopeptide (Lys-Gly) (interchain with G-Cter in SUMO2)" evidence="19">
    <location>
        <position position="424"/>
    </location>
</feature>
<feature type="splice variant" id="VSP_055938" description="In isoform 2." evidence="7">
    <location>
        <begin position="1"/>
        <end position="205"/>
    </location>
</feature>
<feature type="splice variant" id="VSP_055939" description="In isoform 2." evidence="7">
    <location>
        <begin position="233"/>
        <end position="690"/>
    </location>
</feature>
<feature type="sequence conflict" description="In Ref. 2; CAA15422." evidence="8" ref="2">
    <original>R</original>
    <variation>T</variation>
    <location>
        <position position="287"/>
    </location>
</feature>
<feature type="sequence conflict" description="In Ref. 2; CAA15422." evidence="8" ref="2">
    <original>L</original>
    <variation>V</variation>
    <location>
        <position position="348"/>
    </location>
</feature>
<feature type="sequence conflict" description="In Ref. 6; AAB57692." evidence="8" ref="6">
    <original>E</original>
    <variation>K</variation>
    <location>
        <position position="379"/>
    </location>
</feature>
<feature type="sequence conflict" description="In Ref. 2; CAA15422." evidence="8" ref="2">
    <original>A</original>
    <variation>R</variation>
    <location>
        <position position="495"/>
    </location>
</feature>
<feature type="sequence conflict" description="In Ref. 6; AAB57692." evidence="8" ref="6">
    <original>T</original>
    <variation>N</variation>
    <location>
        <position position="616"/>
    </location>
</feature>
<sequence length="794" mass="88976">MNIDDKLEGLFLKCGGIDEMQSSRTMVVMGGVSGQSTVSGELQDSVLQDRSMPHQEILAADEVLQESEMRQQDMISHDELMVHEETVKNDEEQMETHERLPQGLQYALNVPISVKQEITFTDVSEQLMRDKKQIREPVDLQKKKKRKQRSPAKILTINEDGSLGLKTPKSHVCEHCNAAFRTNYHLQRHVFIHTGEKPFQCSQCDMRFIQKYLLQRHEKIHTGEKPFRCDECGMRFIQKYHMERHKRTHSGEKPYQCEYCLQYFSRTDRVLKHKRMCHENHDKKLNRCAIKGGLLTSEEDSGFSTSPKDNSLPKKKRQKTEKKSSGMDKESALDKSDLKKDKNDYLPLYSSSTKVKDEYMVAEYAVEMPHSSVGGSHLEDASGEIHPPKLVLKKINSKRSLKQPLEQNQTISPLSTYEESKVSKYAFELVDKQALLDSEGNADIDQVDNLQEGPSKPVHSSTNYDDAMQFLKKKRYLQAASNNSREYALNVGTIASQPSVTQAAVASVIDESTTASILESQALNVEIKSNHDKNVIPDEVLQTLLDHYSHKANGQHEISFSVADTEVTSSISINSSEVPEVTPSENVGSSSQASSSDKANMLQEYSKFLQQALDRTSQNDAYLNSPSLNFVTDNQTLPNQPAFSSIDKQVYATMPINSFRSGMNSPLRTTPDKSHFGLIVGDSQHSFPFSGDETNHASATSTQDFLDQVTSQKKAEAQPVHQAYQMSSFEQPFRAPYHGSRAGIATQFSTANGQVNLRGPGTSAEFSEFPLVNVNDNRAGMTSSPDATTGQTFG</sequence>
<organism>
    <name type="scientific">Homo sapiens</name>
    <name type="common">Human</name>
    <dbReference type="NCBI Taxonomy" id="9606"/>
    <lineage>
        <taxon>Eukaryota</taxon>
        <taxon>Metazoa</taxon>
        <taxon>Chordata</taxon>
        <taxon>Craniata</taxon>
        <taxon>Vertebrata</taxon>
        <taxon>Euteleostomi</taxon>
        <taxon>Mammalia</taxon>
        <taxon>Eutheria</taxon>
        <taxon>Euarchontoglires</taxon>
        <taxon>Primates</taxon>
        <taxon>Haplorrhini</taxon>
        <taxon>Catarrhini</taxon>
        <taxon>Hominidae</taxon>
        <taxon>Homo</taxon>
    </lineage>
</organism>